<feature type="transit peptide" description="Mitochondrion" evidence="3">
    <location>
        <begin position="1"/>
        <end position="21"/>
    </location>
</feature>
<feature type="chain" id="PRO_0000419659" description="Probable UDP-3-O-acyl-N-acetylglucosamine deacetylase 3, mitochondrial">
    <location>
        <begin position="22"/>
        <end position="326"/>
    </location>
</feature>
<feature type="binding site" evidence="1">
    <location>
        <position position="109"/>
    </location>
    <ligand>
        <name>Zn(2+)</name>
        <dbReference type="ChEBI" id="CHEBI:29105"/>
    </ligand>
</feature>
<feature type="binding site" evidence="1">
    <location>
        <position position="281"/>
    </location>
    <ligand>
        <name>Zn(2+)</name>
        <dbReference type="ChEBI" id="CHEBI:29105"/>
    </ligand>
</feature>
<feature type="binding site" evidence="1">
    <location>
        <position position="285"/>
    </location>
    <ligand>
        <name>Zn(2+)</name>
        <dbReference type="ChEBI" id="CHEBI:29105"/>
    </ligand>
</feature>
<comment type="function">
    <text evidence="4">Involved in the biosynthesis of lipid A, a phosphorylated glycolipid that in bacteria anchors the lipopolysaccharide to the outer membrane of the cell. Lipid A-like molecules in plants may serve as structural components of the outer membranes of mitochondria and/or chloroplasts, or may be involved in signal transduction or plant defense responses (Potential).</text>
</comment>
<comment type="catalytic activity">
    <reaction evidence="1">
        <text>a UDP-3-O-[(3R)-3-hydroxyacyl]-N-acetyl-alpha-D-glucosamine + H2O = a UDP-3-O-[(3R)-3-hydroxyacyl]-alpha-D-glucosamine + acetate</text>
        <dbReference type="Rhea" id="RHEA:67816"/>
        <dbReference type="ChEBI" id="CHEBI:15377"/>
        <dbReference type="ChEBI" id="CHEBI:30089"/>
        <dbReference type="ChEBI" id="CHEBI:137740"/>
        <dbReference type="ChEBI" id="CHEBI:173225"/>
        <dbReference type="EC" id="3.5.1.108"/>
    </reaction>
</comment>
<comment type="cofactor">
    <cofactor evidence="1">
        <name>Zn(2+)</name>
        <dbReference type="ChEBI" id="CHEBI:29105"/>
    </cofactor>
</comment>
<comment type="pathway">
    <text evidence="2">Glycolipid biosynthesis; lipid IV(A) biosynthesis; lipid IV(A) from (3R)-3-hydroxytetradecanoyl-[acyl-carrier-protein] and UDP-N-acetyl-alpha-D-glucosamine: step 2/6.</text>
</comment>
<comment type="subcellular location">
    <subcellularLocation>
        <location evidence="2 6">Mitochondrion</location>
    </subcellularLocation>
</comment>
<comment type="alternative products">
    <event type="alternative splicing"/>
    <isoform>
        <id>P0DKB8-1</id>
        <name>1</name>
        <sequence type="displayed"/>
    </isoform>
    <text>A number of isoforms are produced. According to EST sequences.</text>
</comment>
<comment type="miscellaneous">
    <text evidence="5">Plants silencing LPXC do not have altered morphology compared to wild-type plants when grown under normal growth conditions, but they do not accumulate 2,3-diacylglucosamine-1-phosphate.</text>
</comment>
<comment type="similarity">
    <text evidence="4">Belongs to the LpxC family.</text>
</comment>
<comment type="sequence caution" evidence="4">
    <conflict type="erroneous gene model prediction">
        <sequence resource="EMBL-CDS" id="AAG03128"/>
    </conflict>
    <text>The predicted gene has been split into 2 genes: At1g25054 and At1g25055.</text>
</comment>
<proteinExistence type="evidence at protein level"/>
<organism>
    <name type="scientific">Arabidopsis thaliana</name>
    <name type="common">Mouse-ear cress</name>
    <dbReference type="NCBI Taxonomy" id="3702"/>
    <lineage>
        <taxon>Eukaryota</taxon>
        <taxon>Viridiplantae</taxon>
        <taxon>Streptophyta</taxon>
        <taxon>Embryophyta</taxon>
        <taxon>Tracheophyta</taxon>
        <taxon>Spermatophyta</taxon>
        <taxon>Magnoliopsida</taxon>
        <taxon>eudicotyledons</taxon>
        <taxon>Gunneridae</taxon>
        <taxon>Pentapetalae</taxon>
        <taxon>rosids</taxon>
        <taxon>malvids</taxon>
        <taxon>Brassicales</taxon>
        <taxon>Brassicaceae</taxon>
        <taxon>Camelineae</taxon>
        <taxon>Arabidopsis</taxon>
    </lineage>
</organism>
<reference key="1">
    <citation type="journal article" date="2000" name="Nature">
        <title>Sequence and analysis of chromosome 1 of the plant Arabidopsis thaliana.</title>
        <authorList>
            <person name="Theologis A."/>
            <person name="Ecker J.R."/>
            <person name="Palm C.J."/>
            <person name="Federspiel N.A."/>
            <person name="Kaul S."/>
            <person name="White O."/>
            <person name="Alonso J."/>
            <person name="Altafi H."/>
            <person name="Araujo R."/>
            <person name="Bowman C.L."/>
            <person name="Brooks S.Y."/>
            <person name="Buehler E."/>
            <person name="Chan A."/>
            <person name="Chao Q."/>
            <person name="Chen H."/>
            <person name="Cheuk R.F."/>
            <person name="Chin C.W."/>
            <person name="Chung M.K."/>
            <person name="Conn L."/>
            <person name="Conway A.B."/>
            <person name="Conway A.R."/>
            <person name="Creasy T.H."/>
            <person name="Dewar K."/>
            <person name="Dunn P."/>
            <person name="Etgu P."/>
            <person name="Feldblyum T.V."/>
            <person name="Feng J.-D."/>
            <person name="Fong B."/>
            <person name="Fujii C.Y."/>
            <person name="Gill J.E."/>
            <person name="Goldsmith A.D."/>
            <person name="Haas B."/>
            <person name="Hansen N.F."/>
            <person name="Hughes B."/>
            <person name="Huizar L."/>
            <person name="Hunter J.L."/>
            <person name="Jenkins J."/>
            <person name="Johnson-Hopson C."/>
            <person name="Khan S."/>
            <person name="Khaykin E."/>
            <person name="Kim C.J."/>
            <person name="Koo H.L."/>
            <person name="Kremenetskaia I."/>
            <person name="Kurtz D.B."/>
            <person name="Kwan A."/>
            <person name="Lam B."/>
            <person name="Langin-Hooper S."/>
            <person name="Lee A."/>
            <person name="Lee J.M."/>
            <person name="Lenz C.A."/>
            <person name="Li J.H."/>
            <person name="Li Y.-P."/>
            <person name="Lin X."/>
            <person name="Liu S.X."/>
            <person name="Liu Z.A."/>
            <person name="Luros J.S."/>
            <person name="Maiti R."/>
            <person name="Marziali A."/>
            <person name="Militscher J."/>
            <person name="Miranda M."/>
            <person name="Nguyen M."/>
            <person name="Nierman W.C."/>
            <person name="Osborne B.I."/>
            <person name="Pai G."/>
            <person name="Peterson J."/>
            <person name="Pham P.K."/>
            <person name="Rizzo M."/>
            <person name="Rooney T."/>
            <person name="Rowley D."/>
            <person name="Sakano H."/>
            <person name="Salzberg S.L."/>
            <person name="Schwartz J.R."/>
            <person name="Shinn P."/>
            <person name="Southwick A.M."/>
            <person name="Sun H."/>
            <person name="Tallon L.J."/>
            <person name="Tambunga G."/>
            <person name="Toriumi M.J."/>
            <person name="Town C.D."/>
            <person name="Utterback T."/>
            <person name="Van Aken S."/>
            <person name="Vaysberg M."/>
            <person name="Vysotskaia V.S."/>
            <person name="Walker M."/>
            <person name="Wu D."/>
            <person name="Yu G."/>
            <person name="Fraser C.M."/>
            <person name="Venter J.C."/>
            <person name="Davis R.W."/>
        </authorList>
    </citation>
    <scope>NUCLEOTIDE SEQUENCE [LARGE SCALE GENOMIC DNA]</scope>
    <source>
        <strain>cv. Columbia</strain>
    </source>
</reference>
<reference key="2">
    <citation type="journal article" date="2017" name="Plant J.">
        <title>Araport11: a complete reannotation of the Arabidopsis thaliana reference genome.</title>
        <authorList>
            <person name="Cheng C.Y."/>
            <person name="Krishnakumar V."/>
            <person name="Chan A.P."/>
            <person name="Thibaud-Nissen F."/>
            <person name="Schobel S."/>
            <person name="Town C.D."/>
        </authorList>
    </citation>
    <scope>GENOME REANNOTATION</scope>
    <source>
        <strain>cv. Columbia</strain>
    </source>
</reference>
<reference key="3">
    <citation type="journal article" date="2002" name="Science">
        <title>Functional annotation of a full-length Arabidopsis cDNA collection.</title>
        <authorList>
            <person name="Seki M."/>
            <person name="Narusaka M."/>
            <person name="Kamiya A."/>
            <person name="Ishida J."/>
            <person name="Satou M."/>
            <person name="Sakurai T."/>
            <person name="Nakajima M."/>
            <person name="Enju A."/>
            <person name="Akiyama K."/>
            <person name="Oono Y."/>
            <person name="Muramatsu M."/>
            <person name="Hayashizaki Y."/>
            <person name="Kawai J."/>
            <person name="Carninci P."/>
            <person name="Itoh M."/>
            <person name="Ishii Y."/>
            <person name="Arakawa T."/>
            <person name="Shibata K."/>
            <person name="Shinagawa A."/>
            <person name="Shinozaki K."/>
        </authorList>
    </citation>
    <scope>NUCLEOTIDE SEQUENCE [LARGE SCALE MRNA]</scope>
    <source>
        <strain>cv. Columbia</strain>
    </source>
</reference>
<reference key="4">
    <citation type="journal article" date="2011" name="Proc. Natl. Acad. Sci. U.S.A.">
        <title>Pathway for lipid A biosynthesis in Arabidopsis thaliana resembling that of Escherichia coli.</title>
        <authorList>
            <person name="Li C."/>
            <person name="Guan Z."/>
            <person name="Liu D."/>
            <person name="Raetz C.R."/>
        </authorList>
    </citation>
    <scope>PATHWAY</scope>
    <scope>SUBCELLULAR LOCATION</scope>
    <scope>GENE FAMILY</scope>
    <scope>NOMENCLATURE</scope>
</reference>
<reference key="5">
    <citation type="journal article" date="2015" name="J. Exp. Bot.">
        <title>Identification of cleavage sites and substrate proteins for two mitochondrial intermediate peptidases in Arabidopsis thaliana.</title>
        <authorList>
            <person name="Carrie C."/>
            <person name="Venne A.S."/>
            <person name="Zahedi R.P."/>
            <person name="Soll J."/>
        </authorList>
    </citation>
    <scope>IDENTIFICATION BY MASS SPECTROMETRY</scope>
    <scope>CLEAVAGE OF TRANSIT PEPTIDE AFTER TYR-21</scope>
</reference>
<protein>
    <recommendedName>
        <fullName evidence="1">Probable UDP-3-O-acyl-N-acetylglucosamine deacetylase 3, mitochondrial</fullName>
        <shortName evidence="1">UDP-3-O-acyl-GlcNAc deacetylase 3</shortName>
        <ecNumber evidence="1">3.5.1.108</ecNumber>
    </recommendedName>
    <alternativeName>
        <fullName>Protein LIPID X C3</fullName>
        <shortName>AtLpxC3</shortName>
    </alternativeName>
    <alternativeName>
        <fullName evidence="1">UDP-3-O-[R-3-hydroxymyristoyl]-N-acetylglucosamine deacetylase 3</fullName>
    </alternativeName>
</protein>
<name>LPXC3_ARATH</name>
<dbReference type="EC" id="3.5.1.108" evidence="1"/>
<dbReference type="EMBL" id="AC004133">
    <property type="protein sequence ID" value="AAG03128.1"/>
    <property type="status" value="ALT_SEQ"/>
    <property type="molecule type" value="Genomic_DNA"/>
</dbReference>
<dbReference type="EMBL" id="CP002684">
    <property type="protein sequence ID" value="AEE30573.2"/>
    <property type="molecule type" value="Genomic_DNA"/>
</dbReference>
<dbReference type="EMBL" id="AK118128">
    <property type="protein sequence ID" value="BAC42754.1"/>
    <property type="molecule type" value="mRNA"/>
</dbReference>
<dbReference type="PIR" id="G86380">
    <property type="entry name" value="G86380"/>
</dbReference>
<dbReference type="RefSeq" id="NP_001117349.4">
    <molecule id="P0DKB8-1"/>
    <property type="nucleotide sequence ID" value="NM_001123877.5"/>
</dbReference>
<dbReference type="RefSeq" id="NP_001185090.1">
    <molecule id="P0DKB8-1"/>
    <property type="nucleotide sequence ID" value="NM_001198161.1"/>
</dbReference>
<dbReference type="RefSeq" id="NP_173874.2">
    <molecule id="P0DKB8-1"/>
    <property type="nucleotide sequence ID" value="NM_102312.3"/>
</dbReference>
<dbReference type="RefSeq" id="NP_849706.4">
    <molecule id="P0DKB8-1"/>
    <property type="nucleotide sequence ID" value="NM_179375.4"/>
</dbReference>
<dbReference type="SMR" id="P0DKB8"/>
<dbReference type="FunCoup" id="P0DKB8">
    <property type="interactions" value="7"/>
</dbReference>
<dbReference type="STRING" id="3702.P0DKB8"/>
<dbReference type="EnsemblPlants" id="AT1G24793.1">
    <molecule id="P0DKB8-1"/>
    <property type="protein sequence ID" value="AT1G24793.1"/>
    <property type="gene ID" value="AT1G24793"/>
</dbReference>
<dbReference type="EnsemblPlants" id="AT1G25054.1">
    <molecule id="P0DKB8-1"/>
    <property type="protein sequence ID" value="AT1G25054.1"/>
    <property type="gene ID" value="AT1G25054"/>
</dbReference>
<dbReference type="EnsemblPlants" id="AT1G25145.1">
    <molecule id="P0DKB8-1"/>
    <property type="protein sequence ID" value="AT1G25145.1"/>
    <property type="gene ID" value="AT1G25145"/>
</dbReference>
<dbReference type="EnsemblPlants" id="AT1G25210.2">
    <molecule id="P0DKB8-1"/>
    <property type="protein sequence ID" value="AT1G25210.2"/>
    <property type="gene ID" value="AT1G25210"/>
</dbReference>
<dbReference type="GeneID" id="839094"/>
<dbReference type="Gramene" id="AT1G24793.1">
    <molecule id="P0DKB8-1"/>
    <property type="protein sequence ID" value="AT1G24793.1"/>
    <property type="gene ID" value="AT1G24793"/>
</dbReference>
<dbReference type="Gramene" id="AT1G25054.1">
    <molecule id="P0DKB8-1"/>
    <property type="protein sequence ID" value="AT1G25054.1"/>
    <property type="gene ID" value="AT1G25054"/>
</dbReference>
<dbReference type="Gramene" id="AT1G25145.1">
    <molecule id="P0DKB8-1"/>
    <property type="protein sequence ID" value="AT1G25145.1"/>
    <property type="gene ID" value="AT1G25145"/>
</dbReference>
<dbReference type="Gramene" id="AT1G25210.2">
    <molecule id="P0DKB8-1"/>
    <property type="protein sequence ID" value="AT1G25210.2"/>
    <property type="gene ID" value="AT1G25210"/>
</dbReference>
<dbReference type="KEGG" id="ath:AT1G24793"/>
<dbReference type="KEGG" id="ath:AT1G25054"/>
<dbReference type="KEGG" id="ath:AT1G25145"/>
<dbReference type="KEGG" id="ath:AT1G25210"/>
<dbReference type="Araport" id="AT1G25054"/>
<dbReference type="TAIR" id="AT1G25054">
    <property type="gene designation" value="LPXC3"/>
</dbReference>
<dbReference type="HOGENOM" id="CLU_046528_0_0_1"/>
<dbReference type="InParanoid" id="P0DKB8"/>
<dbReference type="OMA" id="IVFYRSD"/>
<dbReference type="PhylomeDB" id="P0DKB8"/>
<dbReference type="UniPathway" id="UPA00359">
    <property type="reaction ID" value="UER00478"/>
</dbReference>
<dbReference type="PRO" id="PR:P0DKB8"/>
<dbReference type="Proteomes" id="UP000006548">
    <property type="component" value="Chromosome 1"/>
</dbReference>
<dbReference type="ExpressionAtlas" id="P0DKB8">
    <property type="expression patterns" value="baseline"/>
</dbReference>
<dbReference type="GO" id="GO:0016020">
    <property type="term" value="C:membrane"/>
    <property type="evidence" value="ECO:0007669"/>
    <property type="project" value="GOC"/>
</dbReference>
<dbReference type="GO" id="GO:0005739">
    <property type="term" value="C:mitochondrion"/>
    <property type="evidence" value="ECO:0000314"/>
    <property type="project" value="UniProtKB"/>
</dbReference>
<dbReference type="GO" id="GO:0046872">
    <property type="term" value="F:metal ion binding"/>
    <property type="evidence" value="ECO:0007669"/>
    <property type="project" value="UniProtKB-KW"/>
</dbReference>
<dbReference type="GO" id="GO:0103117">
    <property type="term" value="F:UDP-3-O-acyl-N-acetylglucosamine deacetylase activity"/>
    <property type="evidence" value="ECO:0000315"/>
    <property type="project" value="UniProtKB"/>
</dbReference>
<dbReference type="GO" id="GO:0009245">
    <property type="term" value="P:lipid A biosynthetic process"/>
    <property type="evidence" value="ECO:0007669"/>
    <property type="project" value="UniProtKB-KW"/>
</dbReference>
<dbReference type="GO" id="GO:2001289">
    <property type="term" value="P:lipid X metabolic process"/>
    <property type="evidence" value="ECO:0000315"/>
    <property type="project" value="UniProtKB"/>
</dbReference>
<dbReference type="FunFam" id="3.30.230.20:FF:000002">
    <property type="entry name" value="Probable UDP-3-O-acyl-N-acetylglucosamine deacetylase 2, mitochondrial"/>
    <property type="match status" value="1"/>
</dbReference>
<dbReference type="FunFam" id="3.30.1700.10:FF:000002">
    <property type="entry name" value="Probable UDP-3-O-acyl-N-acetylglucosamine deacetylase 3, mitochondrial"/>
    <property type="match status" value="1"/>
</dbReference>
<dbReference type="Gene3D" id="3.30.230.20">
    <property type="entry name" value="lpxc deacetylase, domain 1"/>
    <property type="match status" value="1"/>
</dbReference>
<dbReference type="Gene3D" id="3.30.1700.10">
    <property type="entry name" value="lpxc deacetylase, domain 2"/>
    <property type="match status" value="1"/>
</dbReference>
<dbReference type="HAMAP" id="MF_00388">
    <property type="entry name" value="LpxC"/>
    <property type="match status" value="1"/>
</dbReference>
<dbReference type="InterPro" id="IPR020568">
    <property type="entry name" value="Ribosomal_Su5_D2-typ_SF"/>
</dbReference>
<dbReference type="InterPro" id="IPR004463">
    <property type="entry name" value="UDP-acyl_GlcNac_deAcase"/>
</dbReference>
<dbReference type="InterPro" id="IPR011334">
    <property type="entry name" value="UDP-acyl_GlcNac_deAcase_C"/>
</dbReference>
<dbReference type="InterPro" id="IPR015870">
    <property type="entry name" value="UDP-acyl_N-AcGlcN_deAcase_N"/>
</dbReference>
<dbReference type="NCBIfam" id="TIGR00325">
    <property type="entry name" value="lpxC"/>
    <property type="match status" value="1"/>
</dbReference>
<dbReference type="PANTHER" id="PTHR33694">
    <property type="entry name" value="UDP-3-O-ACYL-N-ACETYLGLUCOSAMINE DEACETYLASE 1, MITOCHONDRIAL-RELATED"/>
    <property type="match status" value="1"/>
</dbReference>
<dbReference type="PANTHER" id="PTHR33694:SF1">
    <property type="entry name" value="UDP-3-O-ACYL-N-ACETYLGLUCOSAMINE DEACETYLASE 1, MITOCHONDRIAL-RELATED"/>
    <property type="match status" value="1"/>
</dbReference>
<dbReference type="Pfam" id="PF03331">
    <property type="entry name" value="LpxC"/>
    <property type="match status" value="1"/>
</dbReference>
<dbReference type="SUPFAM" id="SSF54211">
    <property type="entry name" value="Ribosomal protein S5 domain 2-like"/>
    <property type="match status" value="2"/>
</dbReference>
<keyword id="KW-0025">Alternative splicing</keyword>
<keyword id="KW-0378">Hydrolase</keyword>
<keyword id="KW-0441">Lipid A biosynthesis</keyword>
<keyword id="KW-0444">Lipid biosynthesis</keyword>
<keyword id="KW-0443">Lipid metabolism</keyword>
<keyword id="KW-0479">Metal-binding</keyword>
<keyword id="KW-0496">Mitochondrion</keyword>
<keyword id="KW-1185">Reference proteome</keyword>
<keyword id="KW-0809">Transit peptide</keyword>
<keyword id="KW-0862">Zinc</keyword>
<gene>
    <name type="primary">LPXC3</name>
    <name type="ordered locus">At1g25054</name>
    <name type="ORF">F5A9.8</name>
</gene>
<accession>P0DKB8</accession>
<accession>B3H6R1</accession>
<accession>E2RTM8</accession>
<accession>P0C2G7</accession>
<accession>Q56X64</accession>
<accession>Q56XG5</accession>
<accession>Q7GAV1</accession>
<accession>Q8GXP0</accession>
<accession>Q8LPR6</accession>
<accession>Q9FE36</accession>
<accession>Q9FXK3</accession>
<accession>Q9FXK7</accession>
<evidence type="ECO:0000250" key="1">
    <source>
        <dbReference type="UniProtKB" id="P0A725"/>
    </source>
</evidence>
<evidence type="ECO:0000269" key="2">
    <source>
    </source>
</evidence>
<evidence type="ECO:0000269" key="3">
    <source>
    </source>
</evidence>
<evidence type="ECO:0000305" key="4"/>
<evidence type="ECO:0000305" key="5">
    <source>
    </source>
</evidence>
<evidence type="ECO:0000305" key="6">
    <source>
    </source>
</evidence>
<sequence>MRLPVTVKATKPSFLVIWIRYSSAASSPTVSLNPSGRLQQTLAGSVEVKGKSLHSGKFSTVKLNPEIAGAGRFFEFRSRFIPASIEFAQESPLCTTLLKDELKIRTVEHLLSALEAKGVDNCRIQIESESSDDREVEVPIFDGSAKEWVDAIQGVGINAAQNHDGESVEKMVAHVNKPVYVCKNDTFVAAFPALETRITCGIDFPQVPAIGCQWFSWRPIHESSFAKDIASSRTFCVYEEVERMREAGLIKGGSLDNAIVCSAEHGWMNPPLRFDDEACRHKILDLIGDLSLVSRGGNGGLPVAHIVAYKAGHALHTDLARHLTMD</sequence>